<evidence type="ECO:0000256" key="1">
    <source>
        <dbReference type="SAM" id="MobiDB-lite"/>
    </source>
</evidence>
<evidence type="ECO:0000269" key="2">
    <source>
    </source>
</evidence>
<evidence type="ECO:0000305" key="3"/>
<evidence type="ECO:0007744" key="4">
    <source>
    </source>
</evidence>
<proteinExistence type="evidence at protein level"/>
<reference key="1">
    <citation type="journal article" date="2000" name="Nature">
        <title>Sequence and analysis of chromosome 3 of the plant Arabidopsis thaliana.</title>
        <authorList>
            <person name="Salanoubat M."/>
            <person name="Lemcke K."/>
            <person name="Rieger M."/>
            <person name="Ansorge W."/>
            <person name="Unseld M."/>
            <person name="Fartmann B."/>
            <person name="Valle G."/>
            <person name="Bloecker H."/>
            <person name="Perez-Alonso M."/>
            <person name="Obermaier B."/>
            <person name="Delseny M."/>
            <person name="Boutry M."/>
            <person name="Grivell L.A."/>
            <person name="Mache R."/>
            <person name="Puigdomenech P."/>
            <person name="De Simone V."/>
            <person name="Choisne N."/>
            <person name="Artiguenave F."/>
            <person name="Robert C."/>
            <person name="Brottier P."/>
            <person name="Wincker P."/>
            <person name="Cattolico L."/>
            <person name="Weissenbach J."/>
            <person name="Saurin W."/>
            <person name="Quetier F."/>
            <person name="Schaefer M."/>
            <person name="Mueller-Auer S."/>
            <person name="Gabel C."/>
            <person name="Fuchs M."/>
            <person name="Benes V."/>
            <person name="Wurmbach E."/>
            <person name="Drzonek H."/>
            <person name="Erfle H."/>
            <person name="Jordan N."/>
            <person name="Bangert S."/>
            <person name="Wiedelmann R."/>
            <person name="Kranz H."/>
            <person name="Voss H."/>
            <person name="Holland R."/>
            <person name="Brandt P."/>
            <person name="Nyakatura G."/>
            <person name="Vezzi A."/>
            <person name="D'Angelo M."/>
            <person name="Pallavicini A."/>
            <person name="Toppo S."/>
            <person name="Simionati B."/>
            <person name="Conrad A."/>
            <person name="Hornischer K."/>
            <person name="Kauer G."/>
            <person name="Loehnert T.-H."/>
            <person name="Nordsiek G."/>
            <person name="Reichelt J."/>
            <person name="Scharfe M."/>
            <person name="Schoen O."/>
            <person name="Bargues M."/>
            <person name="Terol J."/>
            <person name="Climent J."/>
            <person name="Navarro P."/>
            <person name="Collado C."/>
            <person name="Perez-Perez A."/>
            <person name="Ottenwaelder B."/>
            <person name="Duchemin D."/>
            <person name="Cooke R."/>
            <person name="Laudie M."/>
            <person name="Berger-Llauro C."/>
            <person name="Purnelle B."/>
            <person name="Masuy D."/>
            <person name="de Haan M."/>
            <person name="Maarse A.C."/>
            <person name="Alcaraz J.-P."/>
            <person name="Cottet A."/>
            <person name="Casacuberta E."/>
            <person name="Monfort A."/>
            <person name="Argiriou A."/>
            <person name="Flores M."/>
            <person name="Liguori R."/>
            <person name="Vitale D."/>
            <person name="Mannhaupt G."/>
            <person name="Haase D."/>
            <person name="Schoof H."/>
            <person name="Rudd S."/>
            <person name="Zaccaria P."/>
            <person name="Mewes H.-W."/>
            <person name="Mayer K.F.X."/>
            <person name="Kaul S."/>
            <person name="Town C.D."/>
            <person name="Koo H.L."/>
            <person name="Tallon L.J."/>
            <person name="Jenkins J."/>
            <person name="Rooney T."/>
            <person name="Rizzo M."/>
            <person name="Walts A."/>
            <person name="Utterback T."/>
            <person name="Fujii C.Y."/>
            <person name="Shea T.P."/>
            <person name="Creasy T.H."/>
            <person name="Haas B."/>
            <person name="Maiti R."/>
            <person name="Wu D."/>
            <person name="Peterson J."/>
            <person name="Van Aken S."/>
            <person name="Pai G."/>
            <person name="Militscher J."/>
            <person name="Sellers P."/>
            <person name="Gill J.E."/>
            <person name="Feldblyum T.V."/>
            <person name="Preuss D."/>
            <person name="Lin X."/>
            <person name="Nierman W.C."/>
            <person name="Salzberg S.L."/>
            <person name="White O."/>
            <person name="Venter J.C."/>
            <person name="Fraser C.M."/>
            <person name="Kaneko T."/>
            <person name="Nakamura Y."/>
            <person name="Sato S."/>
            <person name="Kato T."/>
            <person name="Asamizu E."/>
            <person name="Sasamoto S."/>
            <person name="Kimura T."/>
            <person name="Idesawa K."/>
            <person name="Kawashima K."/>
            <person name="Kishida Y."/>
            <person name="Kiyokawa C."/>
            <person name="Kohara M."/>
            <person name="Matsumoto M."/>
            <person name="Matsuno A."/>
            <person name="Muraki A."/>
            <person name="Nakayama S."/>
            <person name="Nakazaki N."/>
            <person name="Shinpo S."/>
            <person name="Takeuchi C."/>
            <person name="Wada T."/>
            <person name="Watanabe A."/>
            <person name="Yamada M."/>
            <person name="Yasuda M."/>
            <person name="Tabata S."/>
        </authorList>
    </citation>
    <scope>NUCLEOTIDE SEQUENCE [LARGE SCALE GENOMIC DNA]</scope>
    <source>
        <strain>cv. Columbia</strain>
    </source>
</reference>
<reference key="2">
    <citation type="journal article" date="2017" name="Plant J.">
        <title>Araport11: a complete reannotation of the Arabidopsis thaliana reference genome.</title>
        <authorList>
            <person name="Cheng C.Y."/>
            <person name="Krishnakumar V."/>
            <person name="Chan A.P."/>
            <person name="Thibaud-Nissen F."/>
            <person name="Schobel S."/>
            <person name="Town C.D."/>
        </authorList>
    </citation>
    <scope>GENOME REANNOTATION</scope>
    <source>
        <strain>cv. Columbia</strain>
    </source>
</reference>
<reference key="3">
    <citation type="journal article" date="2003" name="Science">
        <title>Empirical analysis of transcriptional activity in the Arabidopsis genome.</title>
        <authorList>
            <person name="Yamada K."/>
            <person name="Lim J."/>
            <person name="Dale J.M."/>
            <person name="Chen H."/>
            <person name="Shinn P."/>
            <person name="Palm C.J."/>
            <person name="Southwick A.M."/>
            <person name="Wu H.C."/>
            <person name="Kim C.J."/>
            <person name="Nguyen M."/>
            <person name="Pham P.K."/>
            <person name="Cheuk R.F."/>
            <person name="Karlin-Newmann G."/>
            <person name="Liu S.X."/>
            <person name="Lam B."/>
            <person name="Sakano H."/>
            <person name="Wu T."/>
            <person name="Yu G."/>
            <person name="Miranda M."/>
            <person name="Quach H.L."/>
            <person name="Tripp M."/>
            <person name="Chang C.H."/>
            <person name="Lee J.M."/>
            <person name="Toriumi M.J."/>
            <person name="Chan M.M."/>
            <person name="Tang C.C."/>
            <person name="Onodera C.S."/>
            <person name="Deng J.M."/>
            <person name="Akiyama K."/>
            <person name="Ansari Y."/>
            <person name="Arakawa T."/>
            <person name="Banh J."/>
            <person name="Banno F."/>
            <person name="Bowser L."/>
            <person name="Brooks S.Y."/>
            <person name="Carninci P."/>
            <person name="Chao Q."/>
            <person name="Choy N."/>
            <person name="Enju A."/>
            <person name="Goldsmith A.D."/>
            <person name="Gurjal M."/>
            <person name="Hansen N.F."/>
            <person name="Hayashizaki Y."/>
            <person name="Johnson-Hopson C."/>
            <person name="Hsuan V.W."/>
            <person name="Iida K."/>
            <person name="Karnes M."/>
            <person name="Khan S."/>
            <person name="Koesema E."/>
            <person name="Ishida J."/>
            <person name="Jiang P.X."/>
            <person name="Jones T."/>
            <person name="Kawai J."/>
            <person name="Kamiya A."/>
            <person name="Meyers C."/>
            <person name="Nakajima M."/>
            <person name="Narusaka M."/>
            <person name="Seki M."/>
            <person name="Sakurai T."/>
            <person name="Satou M."/>
            <person name="Tamse R."/>
            <person name="Vaysberg M."/>
            <person name="Wallender E.K."/>
            <person name="Wong C."/>
            <person name="Yamamura Y."/>
            <person name="Yuan S."/>
            <person name="Shinozaki K."/>
            <person name="Davis R.W."/>
            <person name="Theologis A."/>
            <person name="Ecker J.R."/>
        </authorList>
    </citation>
    <scope>NUCLEOTIDE SEQUENCE [LARGE SCALE MRNA]</scope>
    <source>
        <strain>cv. Columbia</strain>
    </source>
</reference>
<reference key="4">
    <citation type="submission" date="2002-03" db="EMBL/GenBank/DDBJ databases">
        <title>Full-length cDNA from Arabidopsis thaliana.</title>
        <authorList>
            <person name="Brover V.V."/>
            <person name="Troukhan M.E."/>
            <person name="Alexandrov N.A."/>
            <person name="Lu Y.-P."/>
            <person name="Flavell R.B."/>
            <person name="Feldmann K.A."/>
        </authorList>
    </citation>
    <scope>NUCLEOTIDE SEQUENCE [LARGE SCALE MRNA]</scope>
</reference>
<reference key="5">
    <citation type="journal article" date="2004" name="Mol. Cell. Proteomics">
        <title>Identification of new intrinsic proteins in Arabidopsis plasma membrane proteome.</title>
        <authorList>
            <person name="Marmagne A."/>
            <person name="Rouet M.-A."/>
            <person name="Ferro M."/>
            <person name="Rolland N."/>
            <person name="Alcon C."/>
            <person name="Joyard J."/>
            <person name="Garin J."/>
            <person name="Barbier-Brygoo H."/>
            <person name="Ephritikhine G."/>
        </authorList>
    </citation>
    <scope>IDENTIFICATION BY MASS SPECTROMETRY</scope>
    <scope>SUBCELLULAR LOCATION [LARGE SCALE ANALYSIS]</scope>
</reference>
<reference key="6">
    <citation type="journal article" date="2004" name="Plant Cell">
        <title>Phosphoproteomics of the Arabidopsis plasma membrane and a new phosphorylation site database.</title>
        <authorList>
            <person name="Nuehse T.S."/>
            <person name="Stensballe A."/>
            <person name="Jensen O.N."/>
            <person name="Peck S.C."/>
        </authorList>
    </citation>
    <scope>IDENTIFICATION BY MASS SPECTROMETRY [LARGE SCALE ANALYSIS]</scope>
</reference>
<reference key="7">
    <citation type="journal article" date="2007" name="Mol. Cell. Proteomics">
        <title>Temporal analysis of sucrose-induced phosphorylation changes in plasma membrane proteins of Arabidopsis.</title>
        <authorList>
            <person name="Niittylae T."/>
            <person name="Fuglsang A.T."/>
            <person name="Palmgren M.G."/>
            <person name="Frommer W.B."/>
            <person name="Schulze W.X."/>
        </authorList>
    </citation>
    <scope>IDENTIFICATION BY MASS SPECTROMETRY [LARGE SCALE ANALYSIS]</scope>
    <source>
        <tissue>Seedling</tissue>
    </source>
</reference>
<reference key="8">
    <citation type="journal article" date="2009" name="Plant Physiol.">
        <title>Large-scale Arabidopsis phosphoproteome profiling reveals novel chloroplast kinase substrates and phosphorylation networks.</title>
        <authorList>
            <person name="Reiland S."/>
            <person name="Messerli G."/>
            <person name="Baerenfaller K."/>
            <person name="Gerrits B."/>
            <person name="Endler A."/>
            <person name="Grossmann J."/>
            <person name="Gruissem W."/>
            <person name="Baginsky S."/>
        </authorList>
    </citation>
    <scope>PHOSPHORYLATION [LARGE SCALE ANALYSIS] AT SER-13</scope>
    <scope>IDENTIFICATION BY MASS SPECTROMETRY [LARGE SCALE ANALYSIS]</scope>
</reference>
<comment type="subcellular location">
    <subcellularLocation>
        <location evidence="2">Cell membrane</location>
    </subcellularLocation>
</comment>
<comment type="similarity">
    <text evidence="3">Belongs to the remorin family.</text>
</comment>
<dbReference type="EMBL" id="AL137898">
    <property type="protein sequence ID" value="CAB71056.1"/>
    <property type="molecule type" value="Genomic_DNA"/>
</dbReference>
<dbReference type="EMBL" id="CP002686">
    <property type="protein sequence ID" value="AEE80180.1"/>
    <property type="molecule type" value="Genomic_DNA"/>
</dbReference>
<dbReference type="EMBL" id="AF370346">
    <property type="protein sequence ID" value="AAK44161.1"/>
    <property type="molecule type" value="mRNA"/>
</dbReference>
<dbReference type="EMBL" id="AY062977">
    <property type="protein sequence ID" value="AAL34151.1"/>
    <property type="molecule type" value="mRNA"/>
</dbReference>
<dbReference type="EMBL" id="AY088061">
    <property type="protein sequence ID" value="AAM65607.1"/>
    <property type="molecule type" value="mRNA"/>
</dbReference>
<dbReference type="PIR" id="T47918">
    <property type="entry name" value="T47918"/>
</dbReference>
<dbReference type="RefSeq" id="NP_191685.1">
    <property type="nucleotide sequence ID" value="NM_115990.5"/>
</dbReference>
<dbReference type="SMR" id="Q9M2D8"/>
<dbReference type="BioGRID" id="10612">
    <property type="interactions" value="11"/>
</dbReference>
<dbReference type="FunCoup" id="Q9M2D8">
    <property type="interactions" value="37"/>
</dbReference>
<dbReference type="IntAct" id="Q9M2D8">
    <property type="interactions" value="6"/>
</dbReference>
<dbReference type="STRING" id="3702.Q9M2D8"/>
<dbReference type="GlyGen" id="Q9M2D8">
    <property type="glycosylation" value="1 site"/>
</dbReference>
<dbReference type="iPTMnet" id="Q9M2D8"/>
<dbReference type="SwissPalm" id="Q9M2D8"/>
<dbReference type="PaxDb" id="3702-AT3G61260.1"/>
<dbReference type="ProteomicsDB" id="232361"/>
<dbReference type="EnsemblPlants" id="AT3G61260.1">
    <property type="protein sequence ID" value="AT3G61260.1"/>
    <property type="gene ID" value="AT3G61260"/>
</dbReference>
<dbReference type="GeneID" id="825298"/>
<dbReference type="Gramene" id="AT3G61260.1">
    <property type="protein sequence ID" value="AT3G61260.1"/>
    <property type="gene ID" value="AT3G61260"/>
</dbReference>
<dbReference type="KEGG" id="ath:AT3G61260"/>
<dbReference type="Araport" id="AT3G61260"/>
<dbReference type="TAIR" id="AT3G61260">
    <property type="gene designation" value="REM1.2"/>
</dbReference>
<dbReference type="eggNOG" id="ENOG502RXGE">
    <property type="taxonomic scope" value="Eukaryota"/>
</dbReference>
<dbReference type="HOGENOM" id="CLU_088771_1_1_1"/>
<dbReference type="InParanoid" id="Q9M2D8"/>
<dbReference type="OMA" id="GSWENSR"/>
<dbReference type="PhylomeDB" id="Q9M2D8"/>
<dbReference type="PRO" id="PR:Q9M2D8"/>
<dbReference type="Proteomes" id="UP000006548">
    <property type="component" value="Chromosome 3"/>
</dbReference>
<dbReference type="ExpressionAtlas" id="Q9M2D8">
    <property type="expression patterns" value="baseline and differential"/>
</dbReference>
<dbReference type="GO" id="GO:0005829">
    <property type="term" value="C:cytosol"/>
    <property type="evidence" value="ECO:0007005"/>
    <property type="project" value="TAIR"/>
</dbReference>
<dbReference type="GO" id="GO:0000325">
    <property type="term" value="C:plant-type vacuole"/>
    <property type="evidence" value="ECO:0007005"/>
    <property type="project" value="TAIR"/>
</dbReference>
<dbReference type="GO" id="GO:0005886">
    <property type="term" value="C:plasma membrane"/>
    <property type="evidence" value="ECO:0007005"/>
    <property type="project" value="TAIR"/>
</dbReference>
<dbReference type="GO" id="GO:0009506">
    <property type="term" value="C:plasmodesma"/>
    <property type="evidence" value="ECO:0000314"/>
    <property type="project" value="TAIR"/>
</dbReference>
<dbReference type="GO" id="GO:0051607">
    <property type="term" value="P:defense response to virus"/>
    <property type="evidence" value="ECO:0000314"/>
    <property type="project" value="TAIR"/>
</dbReference>
<dbReference type="GO" id="GO:0051665">
    <property type="term" value="P:membrane raft localization"/>
    <property type="evidence" value="ECO:0000314"/>
    <property type="project" value="TAIR"/>
</dbReference>
<dbReference type="GO" id="GO:0009751">
    <property type="term" value="P:response to salicylic acid"/>
    <property type="evidence" value="ECO:0000314"/>
    <property type="project" value="TAIR"/>
</dbReference>
<dbReference type="InterPro" id="IPR005516">
    <property type="entry name" value="Remorin_C"/>
</dbReference>
<dbReference type="InterPro" id="IPR005518">
    <property type="entry name" value="Remorin_N"/>
</dbReference>
<dbReference type="PANTHER" id="PTHR31775">
    <property type="entry name" value="OS02G0117200 PROTEIN"/>
    <property type="match status" value="1"/>
</dbReference>
<dbReference type="PANTHER" id="PTHR31775:SF31">
    <property type="entry name" value="REMORIN-LIKE"/>
    <property type="match status" value="1"/>
</dbReference>
<dbReference type="Pfam" id="PF03763">
    <property type="entry name" value="Remorin_C"/>
    <property type="match status" value="1"/>
</dbReference>
<dbReference type="Pfam" id="PF03766">
    <property type="entry name" value="Remorin_N"/>
    <property type="match status" value="1"/>
</dbReference>
<organism>
    <name type="scientific">Arabidopsis thaliana</name>
    <name type="common">Mouse-ear cress</name>
    <dbReference type="NCBI Taxonomy" id="3702"/>
    <lineage>
        <taxon>Eukaryota</taxon>
        <taxon>Viridiplantae</taxon>
        <taxon>Streptophyta</taxon>
        <taxon>Embryophyta</taxon>
        <taxon>Tracheophyta</taxon>
        <taxon>Spermatophyta</taxon>
        <taxon>Magnoliopsida</taxon>
        <taxon>eudicotyledons</taxon>
        <taxon>Gunneridae</taxon>
        <taxon>Pentapetalae</taxon>
        <taxon>rosids</taxon>
        <taxon>malvids</taxon>
        <taxon>Brassicales</taxon>
        <taxon>Brassicaceae</taxon>
        <taxon>Camelineae</taxon>
        <taxon>Arabidopsis</taxon>
    </lineage>
</organism>
<keyword id="KW-1003">Cell membrane</keyword>
<keyword id="KW-0472">Membrane</keyword>
<keyword id="KW-0597">Phosphoprotein</keyword>
<keyword id="KW-1185">Reference proteome</keyword>
<name>Y3126_ARATH</name>
<protein>
    <recommendedName>
        <fullName>Uncharacterized protein At3g61260</fullName>
    </recommendedName>
</protein>
<gene>
    <name type="ordered locus">At3g61260</name>
    <name type="ORF">T20K12.160</name>
</gene>
<accession>Q9M2D8</accession>
<sequence>MAEEQKIALESESPAKVTTPAPADTPAPAPAEIPAPAPAPTPADVTKDVAEEKIQNPPPEQIFDDSKALTVVEKPVEEPAPAKPASASLDRDVKLADLSKEKRLSFVRAWEESEKSKAENKAEKKIADVHAWENSKKAAVEAQLKKIEEQLEKKKAEYAERMKNKVAAIHKEAEERRAMIEAKRGEDVLKAEETAAKYRATGIVPKATCGCF</sequence>
<feature type="chain" id="PRO_0000324122" description="Uncharacterized protein At3g61260">
    <location>
        <begin position="1"/>
        <end position="212"/>
    </location>
</feature>
<feature type="region of interest" description="Disordered" evidence="1">
    <location>
        <begin position="1"/>
        <end position="88"/>
    </location>
</feature>
<feature type="compositionally biased region" description="Pro residues" evidence="1">
    <location>
        <begin position="23"/>
        <end position="41"/>
    </location>
</feature>
<feature type="compositionally biased region" description="Basic and acidic residues" evidence="1">
    <location>
        <begin position="45"/>
        <end position="54"/>
    </location>
</feature>
<feature type="modified residue" description="Phosphoserine" evidence="4">
    <location>
        <position position="13"/>
    </location>
</feature>